<proteinExistence type="inferred from homology"/>
<comment type="function">
    <text evidence="1">Catalyzes the formation of the alpha-1,6-glucosidic linkages in glycogen by scission of a 1,4-alpha-linked oligosaccharide from growing alpha-1,4-glucan chains and the subsequent attachment of the oligosaccharide to the alpha-1,6 position.</text>
</comment>
<comment type="catalytic activity">
    <reaction evidence="1">
        <text>Transfers a segment of a (1-&gt;4)-alpha-D-glucan chain to a primary hydroxy group in a similar glucan chain.</text>
        <dbReference type="EC" id="2.4.1.18"/>
    </reaction>
</comment>
<comment type="pathway">
    <text evidence="1">Glycan biosynthesis; glycogen biosynthesis.</text>
</comment>
<comment type="subunit">
    <text evidence="1">Monomer.</text>
</comment>
<comment type="similarity">
    <text evidence="1">Belongs to the glycosyl hydrolase 13 family. GlgB subfamily.</text>
</comment>
<accession>Q8E081</accession>
<sequence>MSNKDELYTFGIGENFHLQNYLGVHSENGSFCFRVWAPNAENVQVIGDFTDWRNRPLQMNKNQAGVWEANSLDAREGDLYKYLVTRKGGQVVEKIDPMAVYMERRPGTASVIKVLRNKKWEDGLWMGRRKRLGFQKRPINIYEVHAGSWKKDDFGHPMTFSQLKDYLIPYLVEMNYTHVEFMPLMAHPLDMSWGYQLMGYFAFEHTYGTPEEFQDFVEACHKNNIGVLVDWVPGHFIQNDDALAYFDGTATYEYQNHDRAHNYRWGALNFDLGKNQVQSFLISSALFWIEHYHIDGIRVDAVSNMLYLDYDEGPWEANQFGDNRNLEGYHFLRKLNKVIKERHPNVMMIAEESTASTPITKDLESGGLGFDFKWNMGWMNDILRFYEEDPLYRQYDFNLVTFSFMYIFNENFVLAFSHDEVVHGKKSMMHKMWGDRYNQFAGLRNLYAYQMCHPGKKLLFMGSEFGQFLEWKYNDQLEWENLNDDMNQKMQRYTKQLNQFYKDHKCLWRIDDSFDGLEIIDADNKSETVLSFIRKDDKGDLLLCVFNMTPVERPNFTIGVPQAGIYEEVLNTEMEEFGGVWKNHNPVTKTQVATWKDYDHTLSFTLPALGASVWRIKRRLRK</sequence>
<name>GLGB_STRA5</name>
<protein>
    <recommendedName>
        <fullName evidence="1">1,4-alpha-glucan branching enzyme GlgB</fullName>
        <ecNumber evidence="1">2.4.1.18</ecNumber>
    </recommendedName>
    <alternativeName>
        <fullName evidence="1">1,4-alpha-D-glucan:1,4-alpha-D-glucan 6-glucosyl-transferase</fullName>
    </alternativeName>
    <alternativeName>
        <fullName evidence="1">Alpha-(1-&gt;4)-glucan branching enzyme</fullName>
    </alternativeName>
    <alternativeName>
        <fullName evidence="1">Glycogen branching enzyme</fullName>
        <shortName evidence="1">BE</shortName>
    </alternativeName>
</protein>
<gene>
    <name evidence="1" type="primary">glgB</name>
    <name type="ordered locus">SAG0853</name>
</gene>
<keyword id="KW-0119">Carbohydrate metabolism</keyword>
<keyword id="KW-0320">Glycogen biosynthesis</keyword>
<keyword id="KW-0321">Glycogen metabolism</keyword>
<keyword id="KW-0328">Glycosyltransferase</keyword>
<keyword id="KW-1185">Reference proteome</keyword>
<keyword id="KW-0808">Transferase</keyword>
<dbReference type="EC" id="2.4.1.18" evidence="1"/>
<dbReference type="EMBL" id="AE009948">
    <property type="protein sequence ID" value="AAM99740.1"/>
    <property type="molecule type" value="Genomic_DNA"/>
</dbReference>
<dbReference type="RefSeq" id="NP_687868.1">
    <property type="nucleotide sequence ID" value="NC_004116.1"/>
</dbReference>
<dbReference type="RefSeq" id="WP_000066082.1">
    <property type="nucleotide sequence ID" value="NC_004116.1"/>
</dbReference>
<dbReference type="SMR" id="Q8E081"/>
<dbReference type="STRING" id="208435.SAG0853"/>
<dbReference type="CAZy" id="CBM48">
    <property type="family name" value="Carbohydrate-Binding Module Family 48"/>
</dbReference>
<dbReference type="CAZy" id="GH13">
    <property type="family name" value="Glycoside Hydrolase Family 13"/>
</dbReference>
<dbReference type="KEGG" id="sag:SAG0853"/>
<dbReference type="PATRIC" id="fig|208435.3.peg.859"/>
<dbReference type="HOGENOM" id="CLU_004245_3_2_9"/>
<dbReference type="OrthoDB" id="9800174at2"/>
<dbReference type="UniPathway" id="UPA00164"/>
<dbReference type="Proteomes" id="UP000000821">
    <property type="component" value="Chromosome"/>
</dbReference>
<dbReference type="GO" id="GO:0005829">
    <property type="term" value="C:cytosol"/>
    <property type="evidence" value="ECO:0007669"/>
    <property type="project" value="TreeGrafter"/>
</dbReference>
<dbReference type="GO" id="GO:0003844">
    <property type="term" value="F:1,4-alpha-glucan branching enzyme activity"/>
    <property type="evidence" value="ECO:0007669"/>
    <property type="project" value="UniProtKB-UniRule"/>
</dbReference>
<dbReference type="GO" id="GO:0043169">
    <property type="term" value="F:cation binding"/>
    <property type="evidence" value="ECO:0007669"/>
    <property type="project" value="InterPro"/>
</dbReference>
<dbReference type="GO" id="GO:0004553">
    <property type="term" value="F:hydrolase activity, hydrolyzing O-glycosyl compounds"/>
    <property type="evidence" value="ECO:0007669"/>
    <property type="project" value="InterPro"/>
</dbReference>
<dbReference type="GO" id="GO:0005978">
    <property type="term" value="P:glycogen biosynthetic process"/>
    <property type="evidence" value="ECO:0007669"/>
    <property type="project" value="UniProtKB-UniRule"/>
</dbReference>
<dbReference type="CDD" id="cd11322">
    <property type="entry name" value="AmyAc_Glg_BE"/>
    <property type="match status" value="1"/>
</dbReference>
<dbReference type="CDD" id="cd02855">
    <property type="entry name" value="E_set_GBE_prok_N"/>
    <property type="match status" value="1"/>
</dbReference>
<dbReference type="FunFam" id="3.20.20.80:FF:000003">
    <property type="entry name" value="1,4-alpha-glucan branching enzyme GlgB"/>
    <property type="match status" value="1"/>
</dbReference>
<dbReference type="Gene3D" id="3.20.20.80">
    <property type="entry name" value="Glycosidases"/>
    <property type="match status" value="1"/>
</dbReference>
<dbReference type="Gene3D" id="2.60.40.1180">
    <property type="entry name" value="Golgi alpha-mannosidase II"/>
    <property type="match status" value="1"/>
</dbReference>
<dbReference type="Gene3D" id="2.60.40.10">
    <property type="entry name" value="Immunoglobulins"/>
    <property type="match status" value="1"/>
</dbReference>
<dbReference type="HAMAP" id="MF_00685">
    <property type="entry name" value="GlgB"/>
    <property type="match status" value="1"/>
</dbReference>
<dbReference type="InterPro" id="IPR006048">
    <property type="entry name" value="A-amylase/branching_C"/>
</dbReference>
<dbReference type="InterPro" id="IPR037439">
    <property type="entry name" value="Branching_enzy"/>
</dbReference>
<dbReference type="InterPro" id="IPR006407">
    <property type="entry name" value="GlgB"/>
</dbReference>
<dbReference type="InterPro" id="IPR044143">
    <property type="entry name" value="GlgB_N_E_set_prok"/>
</dbReference>
<dbReference type="InterPro" id="IPR006047">
    <property type="entry name" value="Glyco_hydro_13_cat_dom"/>
</dbReference>
<dbReference type="InterPro" id="IPR004193">
    <property type="entry name" value="Glyco_hydro_13_N"/>
</dbReference>
<dbReference type="InterPro" id="IPR013780">
    <property type="entry name" value="Glyco_hydro_b"/>
</dbReference>
<dbReference type="InterPro" id="IPR017853">
    <property type="entry name" value="Glycoside_hydrolase_SF"/>
</dbReference>
<dbReference type="InterPro" id="IPR013783">
    <property type="entry name" value="Ig-like_fold"/>
</dbReference>
<dbReference type="InterPro" id="IPR014756">
    <property type="entry name" value="Ig_E-set"/>
</dbReference>
<dbReference type="NCBIfam" id="TIGR01515">
    <property type="entry name" value="branching_enzym"/>
    <property type="match status" value="1"/>
</dbReference>
<dbReference type="NCBIfam" id="NF003811">
    <property type="entry name" value="PRK05402.1"/>
    <property type="match status" value="1"/>
</dbReference>
<dbReference type="NCBIfam" id="NF008967">
    <property type="entry name" value="PRK12313.1"/>
    <property type="match status" value="1"/>
</dbReference>
<dbReference type="PANTHER" id="PTHR43651">
    <property type="entry name" value="1,4-ALPHA-GLUCAN-BRANCHING ENZYME"/>
    <property type="match status" value="1"/>
</dbReference>
<dbReference type="PANTHER" id="PTHR43651:SF3">
    <property type="entry name" value="1,4-ALPHA-GLUCAN-BRANCHING ENZYME"/>
    <property type="match status" value="1"/>
</dbReference>
<dbReference type="Pfam" id="PF00128">
    <property type="entry name" value="Alpha-amylase"/>
    <property type="match status" value="2"/>
</dbReference>
<dbReference type="Pfam" id="PF02806">
    <property type="entry name" value="Alpha-amylase_C"/>
    <property type="match status" value="1"/>
</dbReference>
<dbReference type="Pfam" id="PF02922">
    <property type="entry name" value="CBM_48"/>
    <property type="match status" value="1"/>
</dbReference>
<dbReference type="PIRSF" id="PIRSF000463">
    <property type="entry name" value="GlgB"/>
    <property type="match status" value="1"/>
</dbReference>
<dbReference type="SMART" id="SM00642">
    <property type="entry name" value="Aamy"/>
    <property type="match status" value="1"/>
</dbReference>
<dbReference type="SUPFAM" id="SSF51445">
    <property type="entry name" value="(Trans)glycosidases"/>
    <property type="match status" value="1"/>
</dbReference>
<dbReference type="SUPFAM" id="SSF81296">
    <property type="entry name" value="E set domains"/>
    <property type="match status" value="1"/>
</dbReference>
<dbReference type="SUPFAM" id="SSF51011">
    <property type="entry name" value="Glycosyl hydrolase domain"/>
    <property type="match status" value="1"/>
</dbReference>
<reference key="1">
    <citation type="journal article" date="2002" name="Proc. Natl. Acad. Sci. U.S.A.">
        <title>Complete genome sequence and comparative genomic analysis of an emerging human pathogen, serotype V Streptococcus agalactiae.</title>
        <authorList>
            <person name="Tettelin H."/>
            <person name="Masignani V."/>
            <person name="Cieslewicz M.J."/>
            <person name="Eisen J.A."/>
            <person name="Peterson S.N."/>
            <person name="Wessels M.R."/>
            <person name="Paulsen I.T."/>
            <person name="Nelson K.E."/>
            <person name="Margarit I."/>
            <person name="Read T.D."/>
            <person name="Madoff L.C."/>
            <person name="Wolf A.M."/>
            <person name="Beanan M.J."/>
            <person name="Brinkac L.M."/>
            <person name="Daugherty S.C."/>
            <person name="DeBoy R.T."/>
            <person name="Durkin A.S."/>
            <person name="Kolonay J.F."/>
            <person name="Madupu R."/>
            <person name="Lewis M.R."/>
            <person name="Radune D."/>
            <person name="Fedorova N.B."/>
            <person name="Scanlan D."/>
            <person name="Khouri H.M."/>
            <person name="Mulligan S."/>
            <person name="Carty H.A."/>
            <person name="Cline R.T."/>
            <person name="Van Aken S.E."/>
            <person name="Gill J."/>
            <person name="Scarselli M."/>
            <person name="Mora M."/>
            <person name="Iacobini E.T."/>
            <person name="Brettoni C."/>
            <person name="Galli G."/>
            <person name="Mariani M."/>
            <person name="Vegni F."/>
            <person name="Maione D."/>
            <person name="Rinaudo D."/>
            <person name="Rappuoli R."/>
            <person name="Telford J.L."/>
            <person name="Kasper D.L."/>
            <person name="Grandi G."/>
            <person name="Fraser C.M."/>
        </authorList>
    </citation>
    <scope>NUCLEOTIDE SEQUENCE [LARGE SCALE GENOMIC DNA]</scope>
    <source>
        <strain>ATCC BAA-611 / 2603 V/R</strain>
    </source>
</reference>
<organism>
    <name type="scientific">Streptococcus agalactiae serotype V (strain ATCC BAA-611 / 2603 V/R)</name>
    <dbReference type="NCBI Taxonomy" id="208435"/>
    <lineage>
        <taxon>Bacteria</taxon>
        <taxon>Bacillati</taxon>
        <taxon>Bacillota</taxon>
        <taxon>Bacilli</taxon>
        <taxon>Lactobacillales</taxon>
        <taxon>Streptococcaceae</taxon>
        <taxon>Streptococcus</taxon>
    </lineage>
</organism>
<evidence type="ECO:0000255" key="1">
    <source>
        <dbReference type="HAMAP-Rule" id="MF_00685"/>
    </source>
</evidence>
<feature type="chain" id="PRO_0000188745" description="1,4-alpha-glucan branching enzyme GlgB">
    <location>
        <begin position="1"/>
        <end position="622"/>
    </location>
</feature>
<feature type="active site" description="Nucleophile" evidence="1">
    <location>
        <position position="300"/>
    </location>
</feature>
<feature type="active site" description="Proton donor" evidence="1">
    <location>
        <position position="351"/>
    </location>
</feature>